<accession>Q75S48</accession>
<protein>
    <recommendedName>
        <fullName>Acidic phospholipase A2 1</fullName>
        <shortName>svPLA2</shortName>
        <ecNumber>3.1.1.4</ecNumber>
    </recommendedName>
    <alternativeName>
        <fullName>PA2-I</fullName>
    </alternativeName>
    <alternativeName>
        <fullName>Phosphatidylcholine 2-acylhydrolase</fullName>
    </alternativeName>
</protein>
<evidence type="ECO:0000250" key="1"/>
<evidence type="ECO:0000255" key="2"/>
<evidence type="ECO:0000255" key="3">
    <source>
        <dbReference type="PROSITE-ProRule" id="PRU10035"/>
    </source>
</evidence>
<evidence type="ECO:0000255" key="4">
    <source>
        <dbReference type="PROSITE-ProRule" id="PRU10036"/>
    </source>
</evidence>
<evidence type="ECO:0000305" key="5"/>
<proteinExistence type="evidence at transcript level"/>
<reference key="1">
    <citation type="journal article" date="2006" name="Toxicon">
        <title>Molecular cloning of the major lethal toxins from two kraits (Bungarus flaviceps and Bungarus candidus).</title>
        <authorList>
            <person name="Yanoshita R."/>
            <person name="Ogawa Y."/>
            <person name="Murayama N."/>
            <person name="Omori-Satoh T."/>
            <person name="Saguchi K."/>
            <person name="Higuchi S."/>
            <person name="Khow O."/>
            <person name="Chanhome L."/>
            <person name="Samejima Y."/>
            <person name="Sitprija V."/>
        </authorList>
    </citation>
    <scope>NUCLEOTIDE SEQUENCE [MRNA]</scope>
    <source>
        <tissue>Venom gland</tissue>
    </source>
</reference>
<name>PA2A1_BUNCA</name>
<comment type="function">
    <text>PLA2 catalyzes the calcium-dependent hydrolysis of the 2-acyl groups in 3-sn-phosphoglycerides.</text>
</comment>
<comment type="catalytic activity">
    <reaction evidence="3 4">
        <text>a 1,2-diacyl-sn-glycero-3-phosphocholine + H2O = a 1-acyl-sn-glycero-3-phosphocholine + a fatty acid + H(+)</text>
        <dbReference type="Rhea" id="RHEA:15801"/>
        <dbReference type="ChEBI" id="CHEBI:15377"/>
        <dbReference type="ChEBI" id="CHEBI:15378"/>
        <dbReference type="ChEBI" id="CHEBI:28868"/>
        <dbReference type="ChEBI" id="CHEBI:57643"/>
        <dbReference type="ChEBI" id="CHEBI:58168"/>
        <dbReference type="EC" id="3.1.1.4"/>
    </reaction>
</comment>
<comment type="cofactor">
    <cofactor evidence="1">
        <name>Ca(2+)</name>
        <dbReference type="ChEBI" id="CHEBI:29108"/>
    </cofactor>
    <text evidence="1">Binds 1 Ca(2+) ion.</text>
</comment>
<comment type="subcellular location">
    <subcellularLocation>
        <location evidence="1">Secreted</location>
    </subcellularLocation>
</comment>
<comment type="tissue specificity">
    <text>Expressed by the venom gland.</text>
</comment>
<comment type="similarity">
    <text evidence="5">Belongs to the phospholipase A2 family. Group I subfamily. D49 sub-subfamily.</text>
</comment>
<organism>
    <name type="scientific">Bungarus candidus</name>
    <name type="common">Malayan krait</name>
    <dbReference type="NCBI Taxonomy" id="92438"/>
    <lineage>
        <taxon>Eukaryota</taxon>
        <taxon>Metazoa</taxon>
        <taxon>Chordata</taxon>
        <taxon>Craniata</taxon>
        <taxon>Vertebrata</taxon>
        <taxon>Euteleostomi</taxon>
        <taxon>Lepidosauria</taxon>
        <taxon>Squamata</taxon>
        <taxon>Bifurcata</taxon>
        <taxon>Unidentata</taxon>
        <taxon>Episquamata</taxon>
        <taxon>Toxicofera</taxon>
        <taxon>Serpentes</taxon>
        <taxon>Colubroidea</taxon>
        <taxon>Elapidae</taxon>
        <taxon>Bungarinae</taxon>
        <taxon>Bungarus</taxon>
    </lineage>
</organism>
<sequence>MNPAYFLVLAAVCVSLLGAANIPPQPLSFYRYTEMIQCTIRGSLTYLDYMDYGCYCGTGSRGTPVDELDRCCQTHDNCYAEAEEHPKCSSLVKSPYMNLYSYTCSGGTITCNADNDECGAFICNCDRTAALCFAKAPYNEENKEIDISKRCQ</sequence>
<keyword id="KW-0106">Calcium</keyword>
<keyword id="KW-1015">Disulfide bond</keyword>
<keyword id="KW-0378">Hydrolase</keyword>
<keyword id="KW-0442">Lipid degradation</keyword>
<keyword id="KW-0443">Lipid metabolism</keyword>
<keyword id="KW-0479">Metal-binding</keyword>
<keyword id="KW-0964">Secreted</keyword>
<keyword id="KW-0732">Signal</keyword>
<feature type="signal peptide" evidence="2">
    <location>
        <begin position="1"/>
        <end position="19"/>
    </location>
</feature>
<feature type="propeptide" id="PRO_0000271454" evidence="1">
    <location>
        <begin position="20"/>
        <end position="27"/>
    </location>
</feature>
<feature type="chain" id="PRO_5000051030" description="Acidic phospholipase A2 1">
    <location>
        <begin position="28"/>
        <end position="152"/>
    </location>
</feature>
<feature type="active site" evidence="1">
    <location>
        <position position="75"/>
    </location>
</feature>
<feature type="active site" evidence="1">
    <location>
        <position position="126"/>
    </location>
</feature>
<feature type="binding site" evidence="1">
    <location>
        <position position="55"/>
    </location>
    <ligand>
        <name>Ca(2+)</name>
        <dbReference type="ChEBI" id="CHEBI:29108"/>
    </ligand>
</feature>
<feature type="binding site" evidence="1">
    <location>
        <position position="57"/>
    </location>
    <ligand>
        <name>Ca(2+)</name>
        <dbReference type="ChEBI" id="CHEBI:29108"/>
    </ligand>
</feature>
<feature type="binding site" evidence="1">
    <location>
        <position position="59"/>
    </location>
    <ligand>
        <name>Ca(2+)</name>
        <dbReference type="ChEBI" id="CHEBI:29108"/>
    </ligand>
</feature>
<feature type="binding site" evidence="1">
    <location>
        <position position="76"/>
    </location>
    <ligand>
        <name>Ca(2+)</name>
        <dbReference type="ChEBI" id="CHEBI:29108"/>
    </ligand>
</feature>
<feature type="disulfide bond" evidence="1">
    <location>
        <begin position="38"/>
        <end position="104"/>
    </location>
</feature>
<feature type="disulfide bond" evidence="1">
    <location>
        <begin position="54"/>
        <end position="151"/>
    </location>
</feature>
<feature type="disulfide bond" evidence="1">
    <location>
        <begin position="56"/>
        <end position="72"/>
    </location>
</feature>
<feature type="disulfide bond" evidence="1">
    <location>
        <begin position="71"/>
        <end position="132"/>
    </location>
</feature>
<feature type="disulfide bond" evidence="1">
    <location>
        <begin position="78"/>
        <end position="125"/>
    </location>
</feature>
<feature type="disulfide bond" evidence="1">
    <location>
        <begin position="88"/>
        <end position="118"/>
    </location>
</feature>
<feature type="disulfide bond" evidence="1">
    <location>
        <begin position="111"/>
        <end position="123"/>
    </location>
</feature>
<dbReference type="EC" id="3.1.1.4"/>
<dbReference type="EMBL" id="AB158302">
    <property type="protein sequence ID" value="BAD06270.1"/>
    <property type="molecule type" value="mRNA"/>
</dbReference>
<dbReference type="SMR" id="Q75S48"/>
<dbReference type="GO" id="GO:0005576">
    <property type="term" value="C:extracellular region"/>
    <property type="evidence" value="ECO:0007669"/>
    <property type="project" value="UniProtKB-SubCell"/>
</dbReference>
<dbReference type="GO" id="GO:0005509">
    <property type="term" value="F:calcium ion binding"/>
    <property type="evidence" value="ECO:0007669"/>
    <property type="project" value="InterPro"/>
</dbReference>
<dbReference type="GO" id="GO:0047498">
    <property type="term" value="F:calcium-dependent phospholipase A2 activity"/>
    <property type="evidence" value="ECO:0007669"/>
    <property type="project" value="TreeGrafter"/>
</dbReference>
<dbReference type="GO" id="GO:0005543">
    <property type="term" value="F:phospholipid binding"/>
    <property type="evidence" value="ECO:0007669"/>
    <property type="project" value="TreeGrafter"/>
</dbReference>
<dbReference type="GO" id="GO:0050482">
    <property type="term" value="P:arachidonate secretion"/>
    <property type="evidence" value="ECO:0007669"/>
    <property type="project" value="InterPro"/>
</dbReference>
<dbReference type="GO" id="GO:0016042">
    <property type="term" value="P:lipid catabolic process"/>
    <property type="evidence" value="ECO:0007669"/>
    <property type="project" value="UniProtKB-KW"/>
</dbReference>
<dbReference type="GO" id="GO:0006644">
    <property type="term" value="P:phospholipid metabolic process"/>
    <property type="evidence" value="ECO:0007669"/>
    <property type="project" value="InterPro"/>
</dbReference>
<dbReference type="CDD" id="cd00125">
    <property type="entry name" value="PLA2c"/>
    <property type="match status" value="1"/>
</dbReference>
<dbReference type="FunFam" id="1.20.90.10:FF:000011">
    <property type="entry name" value="Phospholipase A(2)"/>
    <property type="match status" value="1"/>
</dbReference>
<dbReference type="Gene3D" id="1.20.90.10">
    <property type="entry name" value="Phospholipase A2 domain"/>
    <property type="match status" value="1"/>
</dbReference>
<dbReference type="InterPro" id="IPR001211">
    <property type="entry name" value="PLipase_A2"/>
</dbReference>
<dbReference type="InterPro" id="IPR033112">
    <property type="entry name" value="PLipase_A2_Asp_AS"/>
</dbReference>
<dbReference type="InterPro" id="IPR016090">
    <property type="entry name" value="PLipase_A2_dom"/>
</dbReference>
<dbReference type="InterPro" id="IPR036444">
    <property type="entry name" value="PLipase_A2_dom_sf"/>
</dbReference>
<dbReference type="InterPro" id="IPR033113">
    <property type="entry name" value="PLipase_A2_His_AS"/>
</dbReference>
<dbReference type="PANTHER" id="PTHR11716:SF94">
    <property type="entry name" value="PHOSPHOLIPASE A2"/>
    <property type="match status" value="1"/>
</dbReference>
<dbReference type="PANTHER" id="PTHR11716">
    <property type="entry name" value="PHOSPHOLIPASE A2 FAMILY MEMBER"/>
    <property type="match status" value="1"/>
</dbReference>
<dbReference type="Pfam" id="PF00068">
    <property type="entry name" value="Phospholip_A2_1"/>
    <property type="match status" value="1"/>
</dbReference>
<dbReference type="PRINTS" id="PR00389">
    <property type="entry name" value="PHPHLIPASEA2"/>
</dbReference>
<dbReference type="SMART" id="SM00085">
    <property type="entry name" value="PA2c"/>
    <property type="match status" value="1"/>
</dbReference>
<dbReference type="SUPFAM" id="SSF48619">
    <property type="entry name" value="Phospholipase A2, PLA2"/>
    <property type="match status" value="1"/>
</dbReference>
<dbReference type="PROSITE" id="PS00119">
    <property type="entry name" value="PA2_ASP"/>
    <property type="match status" value="1"/>
</dbReference>
<dbReference type="PROSITE" id="PS00118">
    <property type="entry name" value="PA2_HIS"/>
    <property type="match status" value="1"/>
</dbReference>